<keyword id="KW-1185">Reference proteome</keyword>
<keyword id="KW-0687">Ribonucleoprotein</keyword>
<keyword id="KW-0689">Ribosomal protein</keyword>
<feature type="chain" id="PRO_1000055454" description="Large ribosomal subunit protein uL13">
    <location>
        <begin position="1"/>
        <end position="154"/>
    </location>
</feature>
<protein>
    <recommendedName>
        <fullName evidence="1">Large ribosomal subunit protein uL13</fullName>
    </recommendedName>
    <alternativeName>
        <fullName evidence="2">50S ribosomal protein L13</fullName>
    </alternativeName>
</protein>
<accession>Q2RSE3</accession>
<gene>
    <name evidence="1" type="primary">rplM</name>
    <name type="ordered locus">Rru_A2152</name>
</gene>
<reference key="1">
    <citation type="journal article" date="2011" name="Stand. Genomic Sci.">
        <title>Complete genome sequence of Rhodospirillum rubrum type strain (S1).</title>
        <authorList>
            <person name="Munk A.C."/>
            <person name="Copeland A."/>
            <person name="Lucas S."/>
            <person name="Lapidus A."/>
            <person name="Del Rio T.G."/>
            <person name="Barry K."/>
            <person name="Detter J.C."/>
            <person name="Hammon N."/>
            <person name="Israni S."/>
            <person name="Pitluck S."/>
            <person name="Brettin T."/>
            <person name="Bruce D."/>
            <person name="Han C."/>
            <person name="Tapia R."/>
            <person name="Gilna P."/>
            <person name="Schmutz J."/>
            <person name="Larimer F."/>
            <person name="Land M."/>
            <person name="Kyrpides N.C."/>
            <person name="Mavromatis K."/>
            <person name="Richardson P."/>
            <person name="Rohde M."/>
            <person name="Goeker M."/>
            <person name="Klenk H.P."/>
            <person name="Zhang Y."/>
            <person name="Roberts G.P."/>
            <person name="Reslewic S."/>
            <person name="Schwartz D.C."/>
        </authorList>
    </citation>
    <scope>NUCLEOTIDE SEQUENCE [LARGE SCALE GENOMIC DNA]</scope>
    <source>
        <strain>ATCC 11170 / ATH 1.1.1 / DSM 467 / LMG 4362 / NCIMB 8255 / S1</strain>
    </source>
</reference>
<comment type="function">
    <text evidence="1">This protein is one of the early assembly proteins of the 50S ribosomal subunit, although it is not seen to bind rRNA by itself. It is important during the early stages of 50S assembly.</text>
</comment>
<comment type="subunit">
    <text evidence="1">Part of the 50S ribosomal subunit.</text>
</comment>
<comment type="similarity">
    <text evidence="1">Belongs to the universal ribosomal protein uL13 family.</text>
</comment>
<evidence type="ECO:0000255" key="1">
    <source>
        <dbReference type="HAMAP-Rule" id="MF_01366"/>
    </source>
</evidence>
<evidence type="ECO:0000305" key="2"/>
<dbReference type="EMBL" id="CP000230">
    <property type="protein sequence ID" value="ABC22952.1"/>
    <property type="molecule type" value="Genomic_DNA"/>
</dbReference>
<dbReference type="RefSeq" id="WP_011390001.1">
    <property type="nucleotide sequence ID" value="NC_007643.1"/>
</dbReference>
<dbReference type="RefSeq" id="YP_427239.1">
    <property type="nucleotide sequence ID" value="NC_007643.1"/>
</dbReference>
<dbReference type="SMR" id="Q2RSE3"/>
<dbReference type="STRING" id="269796.Rru_A2152"/>
<dbReference type="EnsemblBacteria" id="ABC22952">
    <property type="protein sequence ID" value="ABC22952"/>
    <property type="gene ID" value="Rru_A2152"/>
</dbReference>
<dbReference type="KEGG" id="rru:Rru_A2152"/>
<dbReference type="PATRIC" id="fig|269796.9.peg.2245"/>
<dbReference type="eggNOG" id="COG0102">
    <property type="taxonomic scope" value="Bacteria"/>
</dbReference>
<dbReference type="HOGENOM" id="CLU_082184_2_0_5"/>
<dbReference type="PhylomeDB" id="Q2RSE3"/>
<dbReference type="Proteomes" id="UP000001929">
    <property type="component" value="Chromosome"/>
</dbReference>
<dbReference type="GO" id="GO:0022625">
    <property type="term" value="C:cytosolic large ribosomal subunit"/>
    <property type="evidence" value="ECO:0007669"/>
    <property type="project" value="TreeGrafter"/>
</dbReference>
<dbReference type="GO" id="GO:0003729">
    <property type="term" value="F:mRNA binding"/>
    <property type="evidence" value="ECO:0007669"/>
    <property type="project" value="TreeGrafter"/>
</dbReference>
<dbReference type="GO" id="GO:0003735">
    <property type="term" value="F:structural constituent of ribosome"/>
    <property type="evidence" value="ECO:0007669"/>
    <property type="project" value="InterPro"/>
</dbReference>
<dbReference type="GO" id="GO:0017148">
    <property type="term" value="P:negative regulation of translation"/>
    <property type="evidence" value="ECO:0007669"/>
    <property type="project" value="TreeGrafter"/>
</dbReference>
<dbReference type="GO" id="GO:0006412">
    <property type="term" value="P:translation"/>
    <property type="evidence" value="ECO:0007669"/>
    <property type="project" value="UniProtKB-UniRule"/>
</dbReference>
<dbReference type="CDD" id="cd00392">
    <property type="entry name" value="Ribosomal_L13"/>
    <property type="match status" value="1"/>
</dbReference>
<dbReference type="FunFam" id="3.90.1180.10:FF:000001">
    <property type="entry name" value="50S ribosomal protein L13"/>
    <property type="match status" value="1"/>
</dbReference>
<dbReference type="Gene3D" id="3.90.1180.10">
    <property type="entry name" value="Ribosomal protein L13"/>
    <property type="match status" value="1"/>
</dbReference>
<dbReference type="HAMAP" id="MF_01366">
    <property type="entry name" value="Ribosomal_uL13"/>
    <property type="match status" value="1"/>
</dbReference>
<dbReference type="InterPro" id="IPR005822">
    <property type="entry name" value="Ribosomal_uL13"/>
</dbReference>
<dbReference type="InterPro" id="IPR005823">
    <property type="entry name" value="Ribosomal_uL13_bac-type"/>
</dbReference>
<dbReference type="InterPro" id="IPR036899">
    <property type="entry name" value="Ribosomal_uL13_sf"/>
</dbReference>
<dbReference type="NCBIfam" id="TIGR01066">
    <property type="entry name" value="rplM_bact"/>
    <property type="match status" value="1"/>
</dbReference>
<dbReference type="PANTHER" id="PTHR11545:SF2">
    <property type="entry name" value="LARGE RIBOSOMAL SUBUNIT PROTEIN UL13M"/>
    <property type="match status" value="1"/>
</dbReference>
<dbReference type="PANTHER" id="PTHR11545">
    <property type="entry name" value="RIBOSOMAL PROTEIN L13"/>
    <property type="match status" value="1"/>
</dbReference>
<dbReference type="Pfam" id="PF00572">
    <property type="entry name" value="Ribosomal_L13"/>
    <property type="match status" value="1"/>
</dbReference>
<dbReference type="PIRSF" id="PIRSF002181">
    <property type="entry name" value="Ribosomal_L13"/>
    <property type="match status" value="1"/>
</dbReference>
<dbReference type="SUPFAM" id="SSF52161">
    <property type="entry name" value="Ribosomal protein L13"/>
    <property type="match status" value="1"/>
</dbReference>
<sequence>MKTYSAKPSEVDRKWYVIDAEGVVLGRLAVIIADLLRGKNKTIYTPHIDTGDHVVVINAEKVHLTGNKAANERFFWHTGHPGGIKSRSLGQIRDGAHPERLIEKAVERMMPRGPLARAQFKKLRVYGGEAHPHDAQQPVVLDVAALNPKNKRSA</sequence>
<organism>
    <name type="scientific">Rhodospirillum rubrum (strain ATCC 11170 / ATH 1.1.1 / DSM 467 / LMG 4362 / NCIMB 8255 / S1)</name>
    <dbReference type="NCBI Taxonomy" id="269796"/>
    <lineage>
        <taxon>Bacteria</taxon>
        <taxon>Pseudomonadati</taxon>
        <taxon>Pseudomonadota</taxon>
        <taxon>Alphaproteobacteria</taxon>
        <taxon>Rhodospirillales</taxon>
        <taxon>Rhodospirillaceae</taxon>
        <taxon>Rhodospirillum</taxon>
    </lineage>
</organism>
<proteinExistence type="inferred from homology"/>
<name>RL13_RHORT</name>